<keyword id="KW-1185">Reference proteome</keyword>
<keyword id="KW-0687">Ribonucleoprotein</keyword>
<keyword id="KW-0689">Ribosomal protein</keyword>
<protein>
    <recommendedName>
        <fullName evidence="1">Small ribosomal subunit protein uS9</fullName>
    </recommendedName>
    <alternativeName>
        <fullName evidence="3">30S ribosomal protein S9</fullName>
    </alternativeName>
</protein>
<dbReference type="EMBL" id="AE009439">
    <property type="protein sequence ID" value="AAM02690.1"/>
    <property type="molecule type" value="Genomic_DNA"/>
</dbReference>
<dbReference type="RefSeq" id="WP_011019845.1">
    <property type="nucleotide sequence ID" value="NC_003551.1"/>
</dbReference>
<dbReference type="SMR" id="Q8TVB5"/>
<dbReference type="FunCoup" id="Q8TVB5">
    <property type="interactions" value="106"/>
</dbReference>
<dbReference type="STRING" id="190192.MK1477"/>
<dbReference type="PaxDb" id="190192-MK1477"/>
<dbReference type="EnsemblBacteria" id="AAM02690">
    <property type="protein sequence ID" value="AAM02690"/>
    <property type="gene ID" value="MK1477"/>
</dbReference>
<dbReference type="GeneID" id="1478072"/>
<dbReference type="KEGG" id="mka:MK1477"/>
<dbReference type="PATRIC" id="fig|190192.8.peg.1633"/>
<dbReference type="HOGENOM" id="CLU_046483_4_0_2"/>
<dbReference type="InParanoid" id="Q8TVB5"/>
<dbReference type="OrthoDB" id="52677at2157"/>
<dbReference type="Proteomes" id="UP000001826">
    <property type="component" value="Chromosome"/>
</dbReference>
<dbReference type="GO" id="GO:0022627">
    <property type="term" value="C:cytosolic small ribosomal subunit"/>
    <property type="evidence" value="ECO:0007669"/>
    <property type="project" value="TreeGrafter"/>
</dbReference>
<dbReference type="GO" id="GO:0003723">
    <property type="term" value="F:RNA binding"/>
    <property type="evidence" value="ECO:0007669"/>
    <property type="project" value="TreeGrafter"/>
</dbReference>
<dbReference type="GO" id="GO:0003735">
    <property type="term" value="F:structural constituent of ribosome"/>
    <property type="evidence" value="ECO:0007669"/>
    <property type="project" value="InterPro"/>
</dbReference>
<dbReference type="GO" id="GO:0000462">
    <property type="term" value="P:maturation of SSU-rRNA from tricistronic rRNA transcript (SSU-rRNA, 5.8S rRNA, LSU-rRNA)"/>
    <property type="evidence" value="ECO:0007669"/>
    <property type="project" value="TreeGrafter"/>
</dbReference>
<dbReference type="GO" id="GO:0006412">
    <property type="term" value="P:translation"/>
    <property type="evidence" value="ECO:0007669"/>
    <property type="project" value="UniProtKB-UniRule"/>
</dbReference>
<dbReference type="FunFam" id="3.30.230.10:FF:000051">
    <property type="entry name" value="30S ribosomal protein S9"/>
    <property type="match status" value="1"/>
</dbReference>
<dbReference type="Gene3D" id="3.30.230.10">
    <property type="match status" value="1"/>
</dbReference>
<dbReference type="HAMAP" id="MF_00532_A">
    <property type="entry name" value="Ribosomal_uS9_A"/>
    <property type="match status" value="1"/>
</dbReference>
<dbReference type="InterPro" id="IPR020568">
    <property type="entry name" value="Ribosomal_Su5_D2-typ_SF"/>
</dbReference>
<dbReference type="InterPro" id="IPR000754">
    <property type="entry name" value="Ribosomal_uS9"/>
</dbReference>
<dbReference type="InterPro" id="IPR019958">
    <property type="entry name" value="Ribosomal_uS9_archaeal"/>
</dbReference>
<dbReference type="InterPro" id="IPR020574">
    <property type="entry name" value="Ribosomal_uS9_CS"/>
</dbReference>
<dbReference type="InterPro" id="IPR014721">
    <property type="entry name" value="Ribsml_uS5_D2-typ_fold_subgr"/>
</dbReference>
<dbReference type="NCBIfam" id="NF001749">
    <property type="entry name" value="PRK00474.1"/>
    <property type="match status" value="1"/>
</dbReference>
<dbReference type="NCBIfam" id="TIGR03627">
    <property type="entry name" value="uS9_arch"/>
    <property type="match status" value="1"/>
</dbReference>
<dbReference type="PANTHER" id="PTHR21569:SF16">
    <property type="entry name" value="RIBOSOMAL PROTEIN S16"/>
    <property type="match status" value="1"/>
</dbReference>
<dbReference type="PANTHER" id="PTHR21569">
    <property type="entry name" value="RIBOSOMAL PROTEIN S9"/>
    <property type="match status" value="1"/>
</dbReference>
<dbReference type="Pfam" id="PF00380">
    <property type="entry name" value="Ribosomal_S9"/>
    <property type="match status" value="1"/>
</dbReference>
<dbReference type="SUPFAM" id="SSF54211">
    <property type="entry name" value="Ribosomal protein S5 domain 2-like"/>
    <property type="match status" value="1"/>
</dbReference>
<dbReference type="PROSITE" id="PS00360">
    <property type="entry name" value="RIBOSOMAL_S9"/>
    <property type="match status" value="1"/>
</dbReference>
<evidence type="ECO:0000255" key="1">
    <source>
        <dbReference type="HAMAP-Rule" id="MF_00532"/>
    </source>
</evidence>
<evidence type="ECO:0000256" key="2">
    <source>
        <dbReference type="SAM" id="MobiDB-lite"/>
    </source>
</evidence>
<evidence type="ECO:0000305" key="3"/>
<name>RS9_METKA</name>
<sequence>MGRVVQTTGKRKTAIARAVIREGEGRVRVNKRPVNIIEPEMARMKIMEPLIIAGEDIVSQVDIDVKVQGGGWMSQAEAARIAIARGLVEWTGDPDLRDAYMAYDRHMLKGDPRRKEPKKFGGRGARARRQKSYR</sequence>
<reference key="1">
    <citation type="journal article" date="2002" name="Proc. Natl. Acad. Sci. U.S.A.">
        <title>The complete genome of hyperthermophile Methanopyrus kandleri AV19 and monophyly of archaeal methanogens.</title>
        <authorList>
            <person name="Slesarev A.I."/>
            <person name="Mezhevaya K.V."/>
            <person name="Makarova K.S."/>
            <person name="Polushin N.N."/>
            <person name="Shcherbinina O.V."/>
            <person name="Shakhova V.V."/>
            <person name="Belova G.I."/>
            <person name="Aravind L."/>
            <person name="Natale D.A."/>
            <person name="Rogozin I.B."/>
            <person name="Tatusov R.L."/>
            <person name="Wolf Y.I."/>
            <person name="Stetter K.O."/>
            <person name="Malykh A.G."/>
            <person name="Koonin E.V."/>
            <person name="Kozyavkin S.A."/>
        </authorList>
    </citation>
    <scope>NUCLEOTIDE SEQUENCE [LARGE SCALE GENOMIC DNA]</scope>
    <source>
        <strain>AV19 / DSM 6324 / JCM 9639 / NBRC 100938</strain>
    </source>
</reference>
<gene>
    <name evidence="1" type="primary">rps9</name>
    <name type="ordered locus">MK1477</name>
</gene>
<feature type="chain" id="PRO_0000111466" description="Small ribosomal subunit protein uS9">
    <location>
        <begin position="1"/>
        <end position="134"/>
    </location>
</feature>
<feature type="region of interest" description="Disordered" evidence="2">
    <location>
        <begin position="109"/>
        <end position="134"/>
    </location>
</feature>
<feature type="compositionally biased region" description="Basic residues" evidence="2">
    <location>
        <begin position="115"/>
        <end position="134"/>
    </location>
</feature>
<accession>Q8TVB5</accession>
<organism>
    <name type="scientific">Methanopyrus kandleri (strain AV19 / DSM 6324 / JCM 9639 / NBRC 100938)</name>
    <dbReference type="NCBI Taxonomy" id="190192"/>
    <lineage>
        <taxon>Archaea</taxon>
        <taxon>Methanobacteriati</taxon>
        <taxon>Methanobacteriota</taxon>
        <taxon>Methanomada group</taxon>
        <taxon>Methanopyri</taxon>
        <taxon>Methanopyrales</taxon>
        <taxon>Methanopyraceae</taxon>
        <taxon>Methanopyrus</taxon>
    </lineage>
</organism>
<comment type="similarity">
    <text evidence="1">Belongs to the universal ribosomal protein uS9 family.</text>
</comment>
<proteinExistence type="inferred from homology"/>